<evidence type="ECO:0000255" key="1">
    <source>
        <dbReference type="HAMAP-Rule" id="MF_00211"/>
    </source>
</evidence>
<sequence>MSATSIQPLLDILFLGKALTREQTASLFSTLIQGEMNEAVMAAMLMALKIRGETIAEISGAADAMRAAAKPFPYPASSRSQGIIDIVGTGGDGFNTINISTTAAFVAAAAGAKVAKHGNRSVSSKSGSSDLLAQFGIDLTMSPELASRCLESLNLCFLFAPHYHGGVKHAVPVRQALKTRTLFNVLGPLINPARPEFMLLGVYSPELVTPIARVLQALGTQRAMVVHGSGLDEVALHGSTQVAELKDGEIIEYQLTPADFGVPQAQISELEGGEPAQNAQITQSILQGQGSDAHTHAVAINAGCALYLCGLSDSVKAGTALALNTIKSGKAFELLNQLAKVSSEAQE</sequence>
<reference key="1">
    <citation type="submission" date="2006-09" db="EMBL/GenBank/DDBJ databases">
        <title>Complete sequence of chromosome 1 of Shewanella sp. ANA-3.</title>
        <authorList>
            <person name="Copeland A."/>
            <person name="Lucas S."/>
            <person name="Lapidus A."/>
            <person name="Barry K."/>
            <person name="Detter J.C."/>
            <person name="Glavina del Rio T."/>
            <person name="Hammon N."/>
            <person name="Israni S."/>
            <person name="Dalin E."/>
            <person name="Tice H."/>
            <person name="Pitluck S."/>
            <person name="Chertkov O."/>
            <person name="Brettin T."/>
            <person name="Bruce D."/>
            <person name="Han C."/>
            <person name="Tapia R."/>
            <person name="Gilna P."/>
            <person name="Schmutz J."/>
            <person name="Larimer F."/>
            <person name="Land M."/>
            <person name="Hauser L."/>
            <person name="Kyrpides N."/>
            <person name="Kim E."/>
            <person name="Newman D."/>
            <person name="Salticov C."/>
            <person name="Konstantinidis K."/>
            <person name="Klappenback J."/>
            <person name="Tiedje J."/>
            <person name="Richardson P."/>
        </authorList>
    </citation>
    <scope>NUCLEOTIDE SEQUENCE [LARGE SCALE GENOMIC DNA]</scope>
    <source>
        <strain>ANA-3</strain>
    </source>
</reference>
<organism>
    <name type="scientific">Shewanella sp. (strain ANA-3)</name>
    <dbReference type="NCBI Taxonomy" id="94122"/>
    <lineage>
        <taxon>Bacteria</taxon>
        <taxon>Pseudomonadati</taxon>
        <taxon>Pseudomonadota</taxon>
        <taxon>Gammaproteobacteria</taxon>
        <taxon>Alteromonadales</taxon>
        <taxon>Shewanellaceae</taxon>
        <taxon>Shewanella</taxon>
    </lineage>
</organism>
<dbReference type="EC" id="2.4.2.18" evidence="1"/>
<dbReference type="EMBL" id="CP000469">
    <property type="protein sequence ID" value="ABK47752.1"/>
    <property type="molecule type" value="Genomic_DNA"/>
</dbReference>
<dbReference type="RefSeq" id="WP_011716571.1">
    <property type="nucleotide sequence ID" value="NC_008577.1"/>
</dbReference>
<dbReference type="SMR" id="A0KVD3"/>
<dbReference type="STRING" id="94122.Shewana3_1518"/>
<dbReference type="KEGG" id="shn:Shewana3_1518"/>
<dbReference type="eggNOG" id="COG0547">
    <property type="taxonomic scope" value="Bacteria"/>
</dbReference>
<dbReference type="HOGENOM" id="CLU_034315_2_1_6"/>
<dbReference type="OrthoDB" id="9806430at2"/>
<dbReference type="UniPathway" id="UPA00035">
    <property type="reaction ID" value="UER00041"/>
</dbReference>
<dbReference type="Proteomes" id="UP000002589">
    <property type="component" value="Chromosome"/>
</dbReference>
<dbReference type="GO" id="GO:0005829">
    <property type="term" value="C:cytosol"/>
    <property type="evidence" value="ECO:0007669"/>
    <property type="project" value="TreeGrafter"/>
</dbReference>
<dbReference type="GO" id="GO:0004048">
    <property type="term" value="F:anthranilate phosphoribosyltransferase activity"/>
    <property type="evidence" value="ECO:0007669"/>
    <property type="project" value="UniProtKB-UniRule"/>
</dbReference>
<dbReference type="GO" id="GO:0000287">
    <property type="term" value="F:magnesium ion binding"/>
    <property type="evidence" value="ECO:0007669"/>
    <property type="project" value="UniProtKB-UniRule"/>
</dbReference>
<dbReference type="GO" id="GO:0000162">
    <property type="term" value="P:L-tryptophan biosynthetic process"/>
    <property type="evidence" value="ECO:0007669"/>
    <property type="project" value="UniProtKB-UniRule"/>
</dbReference>
<dbReference type="FunFam" id="3.40.1030.10:FF:000002">
    <property type="entry name" value="Anthranilate phosphoribosyltransferase"/>
    <property type="match status" value="1"/>
</dbReference>
<dbReference type="Gene3D" id="3.40.1030.10">
    <property type="entry name" value="Nucleoside phosphorylase/phosphoribosyltransferase catalytic domain"/>
    <property type="match status" value="1"/>
</dbReference>
<dbReference type="Gene3D" id="1.20.970.10">
    <property type="entry name" value="Transferase, Pyrimidine Nucleoside Phosphorylase, Chain C"/>
    <property type="match status" value="1"/>
</dbReference>
<dbReference type="HAMAP" id="MF_00211">
    <property type="entry name" value="TrpD"/>
    <property type="match status" value="1"/>
</dbReference>
<dbReference type="InterPro" id="IPR005940">
    <property type="entry name" value="Anthranilate_Pribosyl_Tfrase"/>
</dbReference>
<dbReference type="InterPro" id="IPR000312">
    <property type="entry name" value="Glycosyl_Trfase_fam3"/>
</dbReference>
<dbReference type="InterPro" id="IPR017459">
    <property type="entry name" value="Glycosyl_Trfase_fam3_N_dom"/>
</dbReference>
<dbReference type="InterPro" id="IPR036320">
    <property type="entry name" value="Glycosyl_Trfase_fam3_N_dom_sf"/>
</dbReference>
<dbReference type="InterPro" id="IPR035902">
    <property type="entry name" value="Nuc_phospho_transferase"/>
</dbReference>
<dbReference type="NCBIfam" id="TIGR01245">
    <property type="entry name" value="trpD"/>
    <property type="match status" value="1"/>
</dbReference>
<dbReference type="PANTHER" id="PTHR43285">
    <property type="entry name" value="ANTHRANILATE PHOSPHORIBOSYLTRANSFERASE"/>
    <property type="match status" value="1"/>
</dbReference>
<dbReference type="PANTHER" id="PTHR43285:SF2">
    <property type="entry name" value="ANTHRANILATE PHOSPHORIBOSYLTRANSFERASE"/>
    <property type="match status" value="1"/>
</dbReference>
<dbReference type="Pfam" id="PF02885">
    <property type="entry name" value="Glycos_trans_3N"/>
    <property type="match status" value="1"/>
</dbReference>
<dbReference type="Pfam" id="PF00591">
    <property type="entry name" value="Glycos_transf_3"/>
    <property type="match status" value="1"/>
</dbReference>
<dbReference type="SUPFAM" id="SSF52418">
    <property type="entry name" value="Nucleoside phosphorylase/phosphoribosyltransferase catalytic domain"/>
    <property type="match status" value="1"/>
</dbReference>
<dbReference type="SUPFAM" id="SSF47648">
    <property type="entry name" value="Nucleoside phosphorylase/phosphoribosyltransferase N-terminal domain"/>
    <property type="match status" value="1"/>
</dbReference>
<protein>
    <recommendedName>
        <fullName evidence="1">Anthranilate phosphoribosyltransferase</fullName>
        <ecNumber evidence="1">2.4.2.18</ecNumber>
    </recommendedName>
</protein>
<name>TRPD_SHESA</name>
<keyword id="KW-0028">Amino-acid biosynthesis</keyword>
<keyword id="KW-0057">Aromatic amino acid biosynthesis</keyword>
<keyword id="KW-0328">Glycosyltransferase</keyword>
<keyword id="KW-0460">Magnesium</keyword>
<keyword id="KW-0479">Metal-binding</keyword>
<keyword id="KW-0808">Transferase</keyword>
<keyword id="KW-0822">Tryptophan biosynthesis</keyword>
<feature type="chain" id="PRO_1000043066" description="Anthranilate phosphoribosyltransferase">
    <location>
        <begin position="1"/>
        <end position="347"/>
    </location>
</feature>
<feature type="binding site" evidence="1">
    <location>
        <position position="88"/>
    </location>
    <ligand>
        <name>5-phospho-alpha-D-ribose 1-diphosphate</name>
        <dbReference type="ChEBI" id="CHEBI:58017"/>
    </ligand>
</feature>
<feature type="binding site" evidence="1">
    <location>
        <position position="88"/>
    </location>
    <ligand>
        <name>anthranilate</name>
        <dbReference type="ChEBI" id="CHEBI:16567"/>
        <label>1</label>
    </ligand>
</feature>
<feature type="binding site" evidence="1">
    <location>
        <begin position="91"/>
        <end position="92"/>
    </location>
    <ligand>
        <name>5-phospho-alpha-D-ribose 1-diphosphate</name>
        <dbReference type="ChEBI" id="CHEBI:58017"/>
    </ligand>
</feature>
<feature type="binding site" evidence="1">
    <location>
        <position position="96"/>
    </location>
    <ligand>
        <name>5-phospho-alpha-D-ribose 1-diphosphate</name>
        <dbReference type="ChEBI" id="CHEBI:58017"/>
    </ligand>
</feature>
<feature type="binding site" evidence="1">
    <location>
        <begin position="98"/>
        <end position="101"/>
    </location>
    <ligand>
        <name>5-phospho-alpha-D-ribose 1-diphosphate</name>
        <dbReference type="ChEBI" id="CHEBI:58017"/>
    </ligand>
</feature>
<feature type="binding site" evidence="1">
    <location>
        <position position="100"/>
    </location>
    <ligand>
        <name>Mg(2+)</name>
        <dbReference type="ChEBI" id="CHEBI:18420"/>
        <label>1</label>
    </ligand>
</feature>
<feature type="binding site" evidence="1">
    <location>
        <begin position="116"/>
        <end position="124"/>
    </location>
    <ligand>
        <name>5-phospho-alpha-D-ribose 1-diphosphate</name>
        <dbReference type="ChEBI" id="CHEBI:58017"/>
    </ligand>
</feature>
<feature type="binding site" evidence="1">
    <location>
        <position position="119"/>
    </location>
    <ligand>
        <name>anthranilate</name>
        <dbReference type="ChEBI" id="CHEBI:16567"/>
        <label>1</label>
    </ligand>
</feature>
<feature type="binding site" evidence="1">
    <location>
        <position position="128"/>
    </location>
    <ligand>
        <name>5-phospho-alpha-D-ribose 1-diphosphate</name>
        <dbReference type="ChEBI" id="CHEBI:58017"/>
    </ligand>
</feature>
<feature type="binding site" evidence="1">
    <location>
        <position position="174"/>
    </location>
    <ligand>
        <name>anthranilate</name>
        <dbReference type="ChEBI" id="CHEBI:16567"/>
        <label>2</label>
    </ligand>
</feature>
<feature type="binding site" evidence="1">
    <location>
        <position position="232"/>
    </location>
    <ligand>
        <name>Mg(2+)</name>
        <dbReference type="ChEBI" id="CHEBI:18420"/>
        <label>2</label>
    </ligand>
</feature>
<feature type="binding site" evidence="1">
    <location>
        <position position="233"/>
    </location>
    <ligand>
        <name>Mg(2+)</name>
        <dbReference type="ChEBI" id="CHEBI:18420"/>
        <label>1</label>
    </ligand>
</feature>
<feature type="binding site" evidence="1">
    <location>
        <position position="233"/>
    </location>
    <ligand>
        <name>Mg(2+)</name>
        <dbReference type="ChEBI" id="CHEBI:18420"/>
        <label>2</label>
    </ligand>
</feature>
<accession>A0KVD3</accession>
<comment type="function">
    <text evidence="1">Catalyzes the transfer of the phosphoribosyl group of 5-phosphorylribose-1-pyrophosphate (PRPP) to anthranilate to yield N-(5'-phosphoribosyl)-anthranilate (PRA).</text>
</comment>
<comment type="catalytic activity">
    <reaction evidence="1">
        <text>N-(5-phospho-beta-D-ribosyl)anthranilate + diphosphate = 5-phospho-alpha-D-ribose 1-diphosphate + anthranilate</text>
        <dbReference type="Rhea" id="RHEA:11768"/>
        <dbReference type="ChEBI" id="CHEBI:16567"/>
        <dbReference type="ChEBI" id="CHEBI:18277"/>
        <dbReference type="ChEBI" id="CHEBI:33019"/>
        <dbReference type="ChEBI" id="CHEBI:58017"/>
        <dbReference type="EC" id="2.4.2.18"/>
    </reaction>
</comment>
<comment type="cofactor">
    <cofactor evidence="1">
        <name>Mg(2+)</name>
        <dbReference type="ChEBI" id="CHEBI:18420"/>
    </cofactor>
    <text evidence="1">Binds 2 magnesium ions per monomer.</text>
</comment>
<comment type="pathway">
    <text evidence="1">Amino-acid biosynthesis; L-tryptophan biosynthesis; L-tryptophan from chorismate: step 2/5.</text>
</comment>
<comment type="subunit">
    <text evidence="1">Homodimer.</text>
</comment>
<comment type="similarity">
    <text evidence="1">Belongs to the anthranilate phosphoribosyltransferase family.</text>
</comment>
<proteinExistence type="inferred from homology"/>
<gene>
    <name evidence="1" type="primary">trpD</name>
    <name type="ordered locus">Shewana3_1518</name>
</gene>